<organism>
    <name type="scientific">Chlamydia trachomatis serovar L2 (strain ATCC VR-902B / DSM 19102 / 434/Bu)</name>
    <dbReference type="NCBI Taxonomy" id="471472"/>
    <lineage>
        <taxon>Bacteria</taxon>
        <taxon>Pseudomonadati</taxon>
        <taxon>Chlamydiota</taxon>
        <taxon>Chlamydiia</taxon>
        <taxon>Chlamydiales</taxon>
        <taxon>Chlamydiaceae</taxon>
        <taxon>Chlamydia/Chlamydophila group</taxon>
        <taxon>Chlamydia</taxon>
    </lineage>
</organism>
<proteinExistence type="inferred from homology"/>
<name>RL18_CHLT2</name>
<reference key="1">
    <citation type="journal article" date="1992" name="J. Bacteriol.">
        <title>Cloning and sequence analysis of the Chlamydia trachomatis spc ribosomal protein gene cluster.</title>
        <authorList>
            <person name="Kaul R."/>
            <person name="Gray G.J."/>
            <person name="Koehncke N.R."/>
            <person name="Gu L.J."/>
        </authorList>
    </citation>
    <scope>NUCLEOTIDE SEQUENCE [GENOMIC DNA]</scope>
</reference>
<reference key="2">
    <citation type="journal article" date="2008" name="Genome Res.">
        <title>Chlamydia trachomatis: genome sequence analysis of lymphogranuloma venereum isolates.</title>
        <authorList>
            <person name="Thomson N.R."/>
            <person name="Holden M.T.G."/>
            <person name="Carder C."/>
            <person name="Lennard N."/>
            <person name="Lockey S.J."/>
            <person name="Marsh P."/>
            <person name="Skipp P."/>
            <person name="O'Connor C.D."/>
            <person name="Goodhead I."/>
            <person name="Norbertzcak H."/>
            <person name="Harris B."/>
            <person name="Ormond D."/>
            <person name="Rance R."/>
            <person name="Quail M.A."/>
            <person name="Parkhill J."/>
            <person name="Stephens R.S."/>
            <person name="Clarke I.N."/>
        </authorList>
    </citation>
    <scope>NUCLEOTIDE SEQUENCE [LARGE SCALE GENOMIC DNA]</scope>
    <source>
        <strain>ATCC VR-902B / DSM 19102 / 434/Bu</strain>
    </source>
</reference>
<accession>B0B887</accession>
<accession>O84519</accession>
<accession>P28536</accession>
<gene>
    <name evidence="1" type="primary">rplR</name>
    <name type="ordered locus">CTL0775</name>
</gene>
<sequence length="123" mass="13379">MESSLYKKTSGKARRALRVRKALKGCSLKPRLSVVKTNKHVYVQLIDDVEGKTLAFISTLAKVAKTSGLTRKNQDNAKALGIKIAELGKGLQVDRVVFDRGAHKYHGVVAMVADGAREGGLQF</sequence>
<dbReference type="EMBL" id="M80325">
    <property type="protein sequence ID" value="AAA23177.1"/>
    <property type="molecule type" value="Genomic_DNA"/>
</dbReference>
<dbReference type="EMBL" id="AM884176">
    <property type="protein sequence ID" value="CAP04213.1"/>
    <property type="molecule type" value="Genomic_DNA"/>
</dbReference>
<dbReference type="PIR" id="I42645">
    <property type="entry name" value="I42645"/>
</dbReference>
<dbReference type="RefSeq" id="WP_009873868.1">
    <property type="nucleotide sequence ID" value="NC_010287.1"/>
</dbReference>
<dbReference type="RefSeq" id="YP_001654846.1">
    <property type="nucleotide sequence ID" value="NC_010287.1"/>
</dbReference>
<dbReference type="SMR" id="B0B887"/>
<dbReference type="KEGG" id="ctb:CTL0775"/>
<dbReference type="PATRIC" id="fig|471472.4.peg.831"/>
<dbReference type="HOGENOM" id="CLU_098841_0_1_0"/>
<dbReference type="Proteomes" id="UP001154402">
    <property type="component" value="Chromosome"/>
</dbReference>
<dbReference type="GO" id="GO:0022625">
    <property type="term" value="C:cytosolic large ribosomal subunit"/>
    <property type="evidence" value="ECO:0007669"/>
    <property type="project" value="TreeGrafter"/>
</dbReference>
<dbReference type="GO" id="GO:0008097">
    <property type="term" value="F:5S rRNA binding"/>
    <property type="evidence" value="ECO:0007669"/>
    <property type="project" value="TreeGrafter"/>
</dbReference>
<dbReference type="GO" id="GO:0003735">
    <property type="term" value="F:structural constituent of ribosome"/>
    <property type="evidence" value="ECO:0007669"/>
    <property type="project" value="InterPro"/>
</dbReference>
<dbReference type="GO" id="GO:0006412">
    <property type="term" value="P:translation"/>
    <property type="evidence" value="ECO:0007669"/>
    <property type="project" value="UniProtKB-UniRule"/>
</dbReference>
<dbReference type="CDD" id="cd00432">
    <property type="entry name" value="Ribosomal_L18_L5e"/>
    <property type="match status" value="1"/>
</dbReference>
<dbReference type="FunFam" id="3.30.420.100:FF:000001">
    <property type="entry name" value="50S ribosomal protein L18"/>
    <property type="match status" value="1"/>
</dbReference>
<dbReference type="Gene3D" id="3.30.420.100">
    <property type="match status" value="1"/>
</dbReference>
<dbReference type="HAMAP" id="MF_01337_B">
    <property type="entry name" value="Ribosomal_uL18_B"/>
    <property type="match status" value="1"/>
</dbReference>
<dbReference type="InterPro" id="IPR004389">
    <property type="entry name" value="Ribosomal_uL18_bac-type"/>
</dbReference>
<dbReference type="InterPro" id="IPR005484">
    <property type="entry name" value="Ribosomal_uL18_bac/euk"/>
</dbReference>
<dbReference type="NCBIfam" id="TIGR00060">
    <property type="entry name" value="L18_bact"/>
    <property type="match status" value="1"/>
</dbReference>
<dbReference type="PANTHER" id="PTHR12899">
    <property type="entry name" value="39S RIBOSOMAL PROTEIN L18, MITOCHONDRIAL"/>
    <property type="match status" value="1"/>
</dbReference>
<dbReference type="PANTHER" id="PTHR12899:SF3">
    <property type="entry name" value="LARGE RIBOSOMAL SUBUNIT PROTEIN UL18M"/>
    <property type="match status" value="1"/>
</dbReference>
<dbReference type="Pfam" id="PF00861">
    <property type="entry name" value="Ribosomal_L18p"/>
    <property type="match status" value="1"/>
</dbReference>
<dbReference type="SUPFAM" id="SSF53137">
    <property type="entry name" value="Translational machinery components"/>
    <property type="match status" value="1"/>
</dbReference>
<evidence type="ECO:0000255" key="1">
    <source>
        <dbReference type="HAMAP-Rule" id="MF_01337"/>
    </source>
</evidence>
<evidence type="ECO:0000305" key="2"/>
<comment type="function">
    <text evidence="1">This is one of the proteins that bind and probably mediate the attachment of the 5S RNA into the large ribosomal subunit, where it forms part of the central protuberance.</text>
</comment>
<comment type="subunit">
    <text evidence="1">Part of the 50S ribosomal subunit; part of the 5S rRNA/L5/L18/L25 subcomplex. Contacts the 5S and 23S rRNAs.</text>
</comment>
<comment type="similarity">
    <text evidence="1">Belongs to the universal ribosomal protein uL18 family.</text>
</comment>
<protein>
    <recommendedName>
        <fullName evidence="1">Large ribosomal subunit protein uL18</fullName>
    </recommendedName>
    <alternativeName>
        <fullName evidence="2">50S ribosomal protein L18</fullName>
    </alternativeName>
</protein>
<keyword id="KW-0687">Ribonucleoprotein</keyword>
<keyword id="KW-0689">Ribosomal protein</keyword>
<keyword id="KW-0694">RNA-binding</keyword>
<keyword id="KW-0699">rRNA-binding</keyword>
<feature type="chain" id="PRO_1000142639" description="Large ribosomal subunit protein uL18">
    <location>
        <begin position="1"/>
        <end position="123"/>
    </location>
</feature>